<feature type="chain" id="PRO_0000387086" description="Ribosomal RNA small subunit methyltransferase H">
    <location>
        <begin position="1"/>
        <end position="326"/>
    </location>
</feature>
<feature type="region of interest" description="Disordered" evidence="2">
    <location>
        <begin position="260"/>
        <end position="306"/>
    </location>
</feature>
<feature type="binding site" evidence="1">
    <location>
        <begin position="35"/>
        <end position="37"/>
    </location>
    <ligand>
        <name>S-adenosyl-L-methionine</name>
        <dbReference type="ChEBI" id="CHEBI:59789"/>
    </ligand>
</feature>
<feature type="binding site" evidence="1">
    <location>
        <position position="53"/>
    </location>
    <ligand>
        <name>S-adenosyl-L-methionine</name>
        <dbReference type="ChEBI" id="CHEBI:59789"/>
    </ligand>
</feature>
<feature type="binding site" evidence="1">
    <location>
        <position position="80"/>
    </location>
    <ligand>
        <name>S-adenosyl-L-methionine</name>
        <dbReference type="ChEBI" id="CHEBI:59789"/>
    </ligand>
</feature>
<feature type="binding site" evidence="1">
    <location>
        <position position="101"/>
    </location>
    <ligand>
        <name>S-adenosyl-L-methionine</name>
        <dbReference type="ChEBI" id="CHEBI:59789"/>
    </ligand>
</feature>
<feature type="binding site" evidence="1">
    <location>
        <position position="108"/>
    </location>
    <ligand>
        <name>S-adenosyl-L-methionine</name>
        <dbReference type="ChEBI" id="CHEBI:59789"/>
    </ligand>
</feature>
<protein>
    <recommendedName>
        <fullName evidence="1">Ribosomal RNA small subunit methyltransferase H</fullName>
        <ecNumber evidence="1">2.1.1.199</ecNumber>
    </recommendedName>
    <alternativeName>
        <fullName evidence="1">16S rRNA m(4)C1402 methyltransferase</fullName>
    </alternativeName>
    <alternativeName>
        <fullName evidence="1">rRNA (cytosine-N(4)-)-methyltransferase RsmH</fullName>
    </alternativeName>
</protein>
<keyword id="KW-0963">Cytoplasm</keyword>
<keyword id="KW-0489">Methyltransferase</keyword>
<keyword id="KW-1185">Reference proteome</keyword>
<keyword id="KW-0698">rRNA processing</keyword>
<keyword id="KW-0949">S-adenosyl-L-methionine</keyword>
<keyword id="KW-0808">Transferase</keyword>
<comment type="function">
    <text evidence="1">Specifically methylates the N4 position of cytidine in position 1402 (C1402) of 16S rRNA.</text>
</comment>
<comment type="catalytic activity">
    <reaction evidence="1">
        <text>cytidine(1402) in 16S rRNA + S-adenosyl-L-methionine = N(4)-methylcytidine(1402) in 16S rRNA + S-adenosyl-L-homocysteine + H(+)</text>
        <dbReference type="Rhea" id="RHEA:42928"/>
        <dbReference type="Rhea" id="RHEA-COMP:10286"/>
        <dbReference type="Rhea" id="RHEA-COMP:10287"/>
        <dbReference type="ChEBI" id="CHEBI:15378"/>
        <dbReference type="ChEBI" id="CHEBI:57856"/>
        <dbReference type="ChEBI" id="CHEBI:59789"/>
        <dbReference type="ChEBI" id="CHEBI:74506"/>
        <dbReference type="ChEBI" id="CHEBI:82748"/>
        <dbReference type="EC" id="2.1.1.199"/>
    </reaction>
</comment>
<comment type="subcellular location">
    <subcellularLocation>
        <location evidence="1">Cytoplasm</location>
    </subcellularLocation>
</comment>
<comment type="similarity">
    <text evidence="1">Belongs to the methyltransferase superfamily. RsmH family.</text>
</comment>
<dbReference type="EC" id="2.1.1.199" evidence="1"/>
<dbReference type="EMBL" id="CP000230">
    <property type="protein sequence ID" value="ABC21759.1"/>
    <property type="molecule type" value="Genomic_DNA"/>
</dbReference>
<dbReference type="RefSeq" id="WP_011388713.1">
    <property type="nucleotide sequence ID" value="NC_007643.1"/>
</dbReference>
<dbReference type="RefSeq" id="YP_426046.1">
    <property type="nucleotide sequence ID" value="NC_007643.1"/>
</dbReference>
<dbReference type="SMR" id="Q2RVT6"/>
<dbReference type="STRING" id="269796.Rru_A0958"/>
<dbReference type="EnsemblBacteria" id="ABC21759">
    <property type="protein sequence ID" value="ABC21759"/>
    <property type="gene ID" value="Rru_A0958"/>
</dbReference>
<dbReference type="KEGG" id="rru:Rru_A0958"/>
<dbReference type="PATRIC" id="fig|269796.9.peg.1014"/>
<dbReference type="eggNOG" id="COG0275">
    <property type="taxonomic scope" value="Bacteria"/>
</dbReference>
<dbReference type="HOGENOM" id="CLU_038422_1_1_5"/>
<dbReference type="PhylomeDB" id="Q2RVT6"/>
<dbReference type="Proteomes" id="UP000001929">
    <property type="component" value="Chromosome"/>
</dbReference>
<dbReference type="GO" id="GO:0005737">
    <property type="term" value="C:cytoplasm"/>
    <property type="evidence" value="ECO:0007669"/>
    <property type="project" value="UniProtKB-SubCell"/>
</dbReference>
<dbReference type="GO" id="GO:0071424">
    <property type="term" value="F:rRNA (cytosine-N4-)-methyltransferase activity"/>
    <property type="evidence" value="ECO:0007669"/>
    <property type="project" value="UniProtKB-UniRule"/>
</dbReference>
<dbReference type="GO" id="GO:0070475">
    <property type="term" value="P:rRNA base methylation"/>
    <property type="evidence" value="ECO:0007669"/>
    <property type="project" value="UniProtKB-UniRule"/>
</dbReference>
<dbReference type="FunFam" id="1.10.150.170:FF:000003">
    <property type="entry name" value="Ribosomal RNA small subunit methyltransferase H"/>
    <property type="match status" value="1"/>
</dbReference>
<dbReference type="Gene3D" id="1.10.150.170">
    <property type="entry name" value="Putative methyltransferase TM0872, insert domain"/>
    <property type="match status" value="1"/>
</dbReference>
<dbReference type="Gene3D" id="3.40.50.150">
    <property type="entry name" value="Vaccinia Virus protein VP39"/>
    <property type="match status" value="1"/>
</dbReference>
<dbReference type="HAMAP" id="MF_01007">
    <property type="entry name" value="16SrRNA_methyltr_H"/>
    <property type="match status" value="1"/>
</dbReference>
<dbReference type="InterPro" id="IPR002903">
    <property type="entry name" value="RsmH"/>
</dbReference>
<dbReference type="InterPro" id="IPR023397">
    <property type="entry name" value="SAM-dep_MeTrfase_MraW_recog"/>
</dbReference>
<dbReference type="InterPro" id="IPR029063">
    <property type="entry name" value="SAM-dependent_MTases_sf"/>
</dbReference>
<dbReference type="NCBIfam" id="TIGR00006">
    <property type="entry name" value="16S rRNA (cytosine(1402)-N(4))-methyltransferase RsmH"/>
    <property type="match status" value="1"/>
</dbReference>
<dbReference type="PANTHER" id="PTHR11265:SF0">
    <property type="entry name" value="12S RRNA N4-METHYLCYTIDINE METHYLTRANSFERASE"/>
    <property type="match status" value="1"/>
</dbReference>
<dbReference type="PANTHER" id="PTHR11265">
    <property type="entry name" value="S-ADENOSYL-METHYLTRANSFERASE MRAW"/>
    <property type="match status" value="1"/>
</dbReference>
<dbReference type="Pfam" id="PF01795">
    <property type="entry name" value="Methyltransf_5"/>
    <property type="match status" value="1"/>
</dbReference>
<dbReference type="PIRSF" id="PIRSF004486">
    <property type="entry name" value="MraW"/>
    <property type="match status" value="1"/>
</dbReference>
<dbReference type="SUPFAM" id="SSF81799">
    <property type="entry name" value="Putative methyltransferase TM0872, insert domain"/>
    <property type="match status" value="1"/>
</dbReference>
<dbReference type="SUPFAM" id="SSF53335">
    <property type="entry name" value="S-adenosyl-L-methionine-dependent methyltransferases"/>
    <property type="match status" value="1"/>
</dbReference>
<evidence type="ECO:0000255" key="1">
    <source>
        <dbReference type="HAMAP-Rule" id="MF_01007"/>
    </source>
</evidence>
<evidence type="ECO:0000256" key="2">
    <source>
        <dbReference type="SAM" id="MobiDB-lite"/>
    </source>
</evidence>
<sequence length="326" mass="35628">MNALTPHFPVMLDEVLSALEPHADGLYVDGTFGNGGYSRGLLERADCRVIAIDRDPAARVRGAALEAEFPGRFTLLSGCFGDMEQLLAAEGISRIDGVALDLGVSSMQLDQAERGFSFQKDGPLDMRMGQQGQTAADLVNTLDEDRLADILYHYGEERKSRWVAHAIVERRAETPFSRTADLATVIRGVVRKSRDGIDPATRSFQALRIVVNDELGELERALGASERLLRAGGRLVVVAFHSLEDRIVKAFVRQRCGESEGVSRHLPQASNAGAGNPPPSFQAVSRRAVKPLDAETRVNPRSRSARLRAVERTEFPAWTVSPGGQR</sequence>
<gene>
    <name evidence="1" type="primary">rsmH</name>
    <name type="synonym">mraW</name>
    <name type="ordered locus">Rru_A0958</name>
</gene>
<organism>
    <name type="scientific">Rhodospirillum rubrum (strain ATCC 11170 / ATH 1.1.1 / DSM 467 / LMG 4362 / NCIMB 8255 / S1)</name>
    <dbReference type="NCBI Taxonomy" id="269796"/>
    <lineage>
        <taxon>Bacteria</taxon>
        <taxon>Pseudomonadati</taxon>
        <taxon>Pseudomonadota</taxon>
        <taxon>Alphaproteobacteria</taxon>
        <taxon>Rhodospirillales</taxon>
        <taxon>Rhodospirillaceae</taxon>
        <taxon>Rhodospirillum</taxon>
    </lineage>
</organism>
<proteinExistence type="inferred from homology"/>
<reference key="1">
    <citation type="journal article" date="2011" name="Stand. Genomic Sci.">
        <title>Complete genome sequence of Rhodospirillum rubrum type strain (S1).</title>
        <authorList>
            <person name="Munk A.C."/>
            <person name="Copeland A."/>
            <person name="Lucas S."/>
            <person name="Lapidus A."/>
            <person name="Del Rio T.G."/>
            <person name="Barry K."/>
            <person name="Detter J.C."/>
            <person name="Hammon N."/>
            <person name="Israni S."/>
            <person name="Pitluck S."/>
            <person name="Brettin T."/>
            <person name="Bruce D."/>
            <person name="Han C."/>
            <person name="Tapia R."/>
            <person name="Gilna P."/>
            <person name="Schmutz J."/>
            <person name="Larimer F."/>
            <person name="Land M."/>
            <person name="Kyrpides N.C."/>
            <person name="Mavromatis K."/>
            <person name="Richardson P."/>
            <person name="Rohde M."/>
            <person name="Goeker M."/>
            <person name="Klenk H.P."/>
            <person name="Zhang Y."/>
            <person name="Roberts G.P."/>
            <person name="Reslewic S."/>
            <person name="Schwartz D.C."/>
        </authorList>
    </citation>
    <scope>NUCLEOTIDE SEQUENCE [LARGE SCALE GENOMIC DNA]</scope>
    <source>
        <strain>ATCC 11170 / ATH 1.1.1 / DSM 467 / LMG 4362 / NCIMB 8255 / S1</strain>
    </source>
</reference>
<accession>Q2RVT6</accession>
<name>RSMH_RHORT</name>